<organism>
    <name type="scientific">Caenorhabditis elegans</name>
    <dbReference type="NCBI Taxonomy" id="6239"/>
    <lineage>
        <taxon>Eukaryota</taxon>
        <taxon>Metazoa</taxon>
        <taxon>Ecdysozoa</taxon>
        <taxon>Nematoda</taxon>
        <taxon>Chromadorea</taxon>
        <taxon>Rhabditida</taxon>
        <taxon>Rhabditina</taxon>
        <taxon>Rhabditomorpha</taxon>
        <taxon>Rhabditoidea</taxon>
        <taxon>Rhabditidae</taxon>
        <taxon>Peloderinae</taxon>
        <taxon>Caenorhabditis</taxon>
    </lineage>
</organism>
<sequence length="672" mass="76459">MPDHARMPRNLSSNKIAKTIAGEDLDEEEVLEMDAGQSAREEGRFVFECAWEVANKVGGIYTVLRSKAQISTEELGDQYCMFGPMKDGKWRLEVDPIEPENRTIRAAMKRFQADGFRCMYGRWLIEGYPKVILFDLGSGAVKMNEWKHELFEQCKIGIPHEDIESNDAVILGFMVALFLKHFRESVTSYTPLVVAHFHEWQAGVGLLMTRLWKLDIATVYTTHATLLGRHLCAGGADLYNNLDSFDLDAEAGKRKIYHQYCLERAACQTAHIFTTVSEITGLEAEHFLCRKPDVLTPNGLNVVKFAALHEFQNLHAQNKEKINQFIRGHFHGHLDFDLDKTLYFFTAGRYEFSNKGGDMFIESLARLNHYLKTTSDPRHMGVTVVAFLIYPAPANSFNVESLKGQAVTKQLKEAVDRIKEKVGQRIFDICLQGHLPEPEELMSPADNILLKRCIMSLHNSSLPPICTHNMIRADDPVLESLRRTSLFNKPEDRVKVVFHPEFLSSVSPLIGLDYEDFVRGCHLGVFPSYYEPWGYTPAECTVMGIPSVSTNLSGFGCFMQEHVEDHEQKGIYVIDRRHKAAEESVQELAQVMYDFCGQSRRQRIILRNSNEGLSALLDWQNLGVFYRDCRRLALERLHPDVDKIMRDNEGKVPSAATSRRPSIHSSDGEDDE</sequence>
<protein>
    <recommendedName>
        <fullName>Glycogen [starch] synthase</fullName>
        <shortName evidence="5">GS</shortName>
        <ecNumber evidence="3">2.4.1.11</ecNumber>
    </recommendedName>
</protein>
<keyword id="KW-0002">3D-structure</keyword>
<keyword id="KW-0320">Glycogen biosynthesis</keyword>
<keyword id="KW-0328">Glycosyltransferase</keyword>
<keyword id="KW-1185">Reference proteome</keyword>
<keyword id="KW-0808">Transferase</keyword>
<dbReference type="EC" id="2.4.1.11" evidence="3"/>
<dbReference type="EMBL" id="AL110485">
    <property type="protein sequence ID" value="CAB60373.1"/>
    <property type="molecule type" value="Genomic_DNA"/>
</dbReference>
<dbReference type="RefSeq" id="NP_496736.1">
    <property type="nucleotide sequence ID" value="NM_064335.6"/>
</dbReference>
<dbReference type="PDB" id="4QLB">
    <property type="method" value="X-ray"/>
    <property type="resolution" value="2.60 A"/>
    <property type="chains" value="A/B/C/D=1-672"/>
</dbReference>
<dbReference type="PDBsum" id="4QLB"/>
<dbReference type="SMR" id="Q9U2D9"/>
<dbReference type="BioGRID" id="40222">
    <property type="interactions" value="26"/>
</dbReference>
<dbReference type="ComplexPortal" id="CPX-3523">
    <property type="entry name" value="Glycogen synthase-Glycogenin complex"/>
</dbReference>
<dbReference type="DIP" id="DIP-26557N"/>
<dbReference type="FunCoup" id="Q9U2D9">
    <property type="interactions" value="869"/>
</dbReference>
<dbReference type="IntAct" id="Q9U2D9">
    <property type="interactions" value="15"/>
</dbReference>
<dbReference type="STRING" id="6239.Y46G5A.31.1"/>
<dbReference type="CAZy" id="GT3">
    <property type="family name" value="Glycosyltransferase Family 3"/>
</dbReference>
<dbReference type="iPTMnet" id="Q9U2D9"/>
<dbReference type="PaxDb" id="6239-Y46G5A.31"/>
<dbReference type="PeptideAtlas" id="Q9U2D9"/>
<dbReference type="EnsemblMetazoa" id="Y46G5A.31.1">
    <property type="protein sequence ID" value="Y46G5A.31.1"/>
    <property type="gene ID" value="WBGene00001793"/>
</dbReference>
<dbReference type="GeneID" id="174924"/>
<dbReference type="KEGG" id="cel:CELE_Y46G5A.31"/>
<dbReference type="UCSC" id="Y46G5A.31">
    <property type="organism name" value="c. elegans"/>
</dbReference>
<dbReference type="AGR" id="WB:WBGene00001793"/>
<dbReference type="CTD" id="174924"/>
<dbReference type="WormBase" id="Y46G5A.31">
    <property type="protein sequence ID" value="CE24302"/>
    <property type="gene ID" value="WBGene00001793"/>
    <property type="gene designation" value="gsy-1"/>
</dbReference>
<dbReference type="eggNOG" id="KOG3742">
    <property type="taxonomic scope" value="Eukaryota"/>
</dbReference>
<dbReference type="GeneTree" id="ENSGT00390000018612"/>
<dbReference type="HOGENOM" id="CLU_015910_1_0_1"/>
<dbReference type="InParanoid" id="Q9U2D9"/>
<dbReference type="OMA" id="RDVRNHI"/>
<dbReference type="OrthoDB" id="6335297at2759"/>
<dbReference type="PhylomeDB" id="Q9U2D9"/>
<dbReference type="Reactome" id="R-CEL-3322077">
    <property type="pathway name" value="Glycogen synthesis"/>
</dbReference>
<dbReference type="SignaLink" id="Q9U2D9"/>
<dbReference type="UniPathway" id="UPA00164"/>
<dbReference type="EvolutionaryTrace" id="Q9U2D9"/>
<dbReference type="PRO" id="PR:Q9U2D9"/>
<dbReference type="Proteomes" id="UP000001940">
    <property type="component" value="Chromosome II"/>
</dbReference>
<dbReference type="Bgee" id="WBGene00001793">
    <property type="expression patterns" value="Expressed in larva and 4 other cell types or tissues"/>
</dbReference>
<dbReference type="GO" id="GO:0005737">
    <property type="term" value="C:cytoplasm"/>
    <property type="evidence" value="ECO:0000314"/>
    <property type="project" value="ComplexPortal"/>
</dbReference>
<dbReference type="GO" id="GO:0004373">
    <property type="term" value="F:alpha-1,4-glucan glucosyltransferase (UDP-glucose donor) activity"/>
    <property type="evidence" value="ECO:0000318"/>
    <property type="project" value="GO_Central"/>
</dbReference>
<dbReference type="GO" id="GO:0005978">
    <property type="term" value="P:glycogen biosynthetic process"/>
    <property type="evidence" value="ECO:0000314"/>
    <property type="project" value="ComplexPortal"/>
</dbReference>
<dbReference type="CDD" id="cd03793">
    <property type="entry name" value="GT3_GSY2-like"/>
    <property type="match status" value="1"/>
</dbReference>
<dbReference type="FunFam" id="3.40.50.2000:FF:000014">
    <property type="entry name" value="Glycogen [starch] synthase"/>
    <property type="match status" value="1"/>
</dbReference>
<dbReference type="FunFam" id="3.40.50.2000:FF:000247">
    <property type="entry name" value="Glycogen [starch] synthase"/>
    <property type="match status" value="1"/>
</dbReference>
<dbReference type="Gene3D" id="3.40.50.2000">
    <property type="entry name" value="Glycogen Phosphorylase B"/>
    <property type="match status" value="2"/>
</dbReference>
<dbReference type="InterPro" id="IPR008631">
    <property type="entry name" value="Glycogen_synth"/>
</dbReference>
<dbReference type="PANTHER" id="PTHR10176:SF3">
    <property type="entry name" value="GLYCOGEN [STARCH] SYNTHASE"/>
    <property type="match status" value="1"/>
</dbReference>
<dbReference type="PANTHER" id="PTHR10176">
    <property type="entry name" value="GLYCOGEN SYNTHASE"/>
    <property type="match status" value="1"/>
</dbReference>
<dbReference type="Pfam" id="PF05693">
    <property type="entry name" value="Glycogen_syn"/>
    <property type="match status" value="1"/>
</dbReference>
<dbReference type="SUPFAM" id="SSF53756">
    <property type="entry name" value="UDP-Glycosyltransferase/glycogen phosphorylase"/>
    <property type="match status" value="2"/>
</dbReference>
<name>GYS_CAEEL</name>
<gene>
    <name evidence="7" type="primary">gsy-1</name>
    <name evidence="7" type="ORF">Y46G5A.31</name>
</gene>
<proteinExistence type="evidence at protein level"/>
<evidence type="ECO:0000250" key="1"/>
<evidence type="ECO:0000256" key="2">
    <source>
        <dbReference type="SAM" id="MobiDB-lite"/>
    </source>
</evidence>
<evidence type="ECO:0000269" key="3">
    <source>
    </source>
</evidence>
<evidence type="ECO:0000269" key="4">
    <source>
    </source>
</evidence>
<evidence type="ECO:0000303" key="5">
    <source>
    </source>
</evidence>
<evidence type="ECO:0000305" key="6"/>
<evidence type="ECO:0000312" key="7">
    <source>
        <dbReference type="WormBase" id="Y46G5A.31"/>
    </source>
</evidence>
<evidence type="ECO:0007829" key="8">
    <source>
        <dbReference type="PDB" id="4QLB"/>
    </source>
</evidence>
<reference key="1">
    <citation type="journal article" date="1998" name="Science">
        <title>Genome sequence of the nematode C. elegans: a platform for investigating biology.</title>
        <authorList>
            <consortium name="The C. elegans sequencing consortium"/>
        </authorList>
    </citation>
    <scope>NUCLEOTIDE SEQUENCE [LARGE SCALE GENOMIC DNA]</scope>
    <source>
        <strain>Bristol N2</strain>
    </source>
</reference>
<reference key="2">
    <citation type="journal article" date="2015" name="PLoS Genet.">
        <title>FLCN and AMPK Confer Resistance to Hyperosmotic Stress via Remodeling of Glycogen Stores.</title>
        <authorList>
            <person name="Possik E."/>
            <person name="Ajisebutu A."/>
            <person name="Manteghi S."/>
            <person name="Gingras M.C."/>
            <person name="Vijayaraghavan T."/>
            <person name="Flamand M."/>
            <person name="Coull B."/>
            <person name="Schmeisser K."/>
            <person name="Duchaine T."/>
            <person name="van Steensel M."/>
            <person name="Hall D.H."/>
            <person name="Pause A."/>
        </authorList>
    </citation>
    <scope>DISRUPTION PHENOTYPE</scope>
</reference>
<reference key="3">
    <citation type="journal article" date="2014" name="Proc. Natl. Acad. Sci. U.S.A.">
        <title>Structural basis for the recruitment of glycogen synthase by glycogenin.</title>
        <authorList>
            <person name="Zeqiraj E."/>
            <person name="Tang X."/>
            <person name="Hunter R.W."/>
            <person name="Garcia-Rocha M."/>
            <person name="Judd A."/>
            <person name="Deak M."/>
            <person name="von Wilamowitz-Moellendorff A."/>
            <person name="Kurinov I."/>
            <person name="Guinovart J.J."/>
            <person name="Tyers M."/>
            <person name="Sakamoto K."/>
            <person name="Sicheri F."/>
        </authorList>
    </citation>
    <scope>X-RAY CRYSTALLOGRAPHY (2.60 ANGSTROMS) IN COMPLEX WITH GYG-1</scope>
    <scope>PATHWAY</scope>
    <scope>FUNCTION</scope>
    <scope>CATALYTIC ACTIVITY</scope>
    <scope>BIOPHYSICOCHEMICAL PROPERTIES</scope>
    <scope>MUTAGENESIS OF PHE-151; GLY-157; TYR-257 AND CYS-261</scope>
</reference>
<feature type="chain" id="PRO_0000194770" description="Glycogen [starch] synthase">
    <location>
        <begin position="1"/>
        <end position="672"/>
    </location>
</feature>
<feature type="region of interest" description="Disordered" evidence="2">
    <location>
        <begin position="645"/>
        <end position="672"/>
    </location>
</feature>
<feature type="compositionally biased region" description="Polar residues" evidence="2">
    <location>
        <begin position="655"/>
        <end position="665"/>
    </location>
</feature>
<feature type="binding site" evidence="1">
    <location>
        <position position="56"/>
    </location>
    <ligand>
        <name>UDP-alpha-D-glucose</name>
        <dbReference type="ChEBI" id="CHEBI:58885"/>
    </ligand>
</feature>
<feature type="mutagenesis site" description="Partially inhibits the interaction with gyg-1. Loss of function." evidence="3">
    <original>F</original>
    <variation>A</variation>
    <location>
        <position position="151"/>
    </location>
</feature>
<feature type="mutagenesis site" description="Partially inhibits the interaction with gyg-1. Loss of function." evidence="3">
    <original>F</original>
    <variation>R</variation>
    <location>
        <position position="151"/>
    </location>
</feature>
<feature type="mutagenesis site" description="Partially inhibits the interaction with gyg-1. Loss of function." evidence="3">
    <original>G</original>
    <variation>R</variation>
    <location>
        <position position="157"/>
    </location>
</feature>
<feature type="mutagenesis site" description="Complete inhibition of the interaction with gyg-1. Loss of function." evidence="3">
    <original>Y</original>
    <variation>A</variation>
    <location>
        <position position="257"/>
    </location>
</feature>
<feature type="mutagenesis site" description="Slight reduction in the interaction with gyg-1. Partial loss of function in absence of glycogen branching enzyme." evidence="3">
    <original>C</original>
    <variation>A</variation>
    <location>
        <position position="261"/>
    </location>
</feature>
<feature type="mutagenesis site" description="Complete inhibition of the interaction with gyg-1. Loss of function." evidence="3">
    <original>C</original>
    <variation>R</variation>
    <location>
        <position position="261"/>
    </location>
</feature>
<feature type="strand" evidence="8">
    <location>
        <begin position="7"/>
        <end position="9"/>
    </location>
</feature>
<feature type="helix" evidence="8">
    <location>
        <begin position="13"/>
        <end position="21"/>
    </location>
</feature>
<feature type="helix" evidence="8">
    <location>
        <begin position="27"/>
        <end position="29"/>
    </location>
</feature>
<feature type="helix" evidence="8">
    <location>
        <begin position="37"/>
        <end position="42"/>
    </location>
</feature>
<feature type="strand" evidence="8">
    <location>
        <begin position="44"/>
        <end position="50"/>
    </location>
</feature>
<feature type="turn" evidence="8">
    <location>
        <begin position="51"/>
        <end position="54"/>
    </location>
</feature>
<feature type="strand" evidence="8">
    <location>
        <begin position="57"/>
        <end position="59"/>
    </location>
</feature>
<feature type="helix" evidence="8">
    <location>
        <begin position="60"/>
        <end position="75"/>
    </location>
</feature>
<feature type="helix" evidence="8">
    <location>
        <begin position="76"/>
        <end position="78"/>
    </location>
</feature>
<feature type="strand" evidence="8">
    <location>
        <begin position="79"/>
        <end position="84"/>
    </location>
</feature>
<feature type="helix" evidence="8">
    <location>
        <begin position="89"/>
        <end position="92"/>
    </location>
</feature>
<feature type="strand" evidence="8">
    <location>
        <begin position="94"/>
        <end position="96"/>
    </location>
</feature>
<feature type="helix" evidence="8">
    <location>
        <begin position="102"/>
        <end position="111"/>
    </location>
</feature>
<feature type="helix" evidence="8">
    <location>
        <begin position="112"/>
        <end position="114"/>
    </location>
</feature>
<feature type="strand" evidence="8">
    <location>
        <begin position="118"/>
        <end position="123"/>
    </location>
</feature>
<feature type="strand" evidence="8">
    <location>
        <begin position="130"/>
        <end position="134"/>
    </location>
</feature>
<feature type="helix" evidence="8">
    <location>
        <begin position="136"/>
        <end position="142"/>
    </location>
</feature>
<feature type="helix" evidence="8">
    <location>
        <begin position="143"/>
        <end position="153"/>
    </location>
</feature>
<feature type="helix" evidence="8">
    <location>
        <begin position="163"/>
        <end position="184"/>
    </location>
</feature>
<feature type="strand" evidence="8">
    <location>
        <begin position="192"/>
        <end position="199"/>
    </location>
</feature>
<feature type="turn" evidence="8">
    <location>
        <begin position="200"/>
        <end position="202"/>
    </location>
</feature>
<feature type="helix" evidence="8">
    <location>
        <begin position="203"/>
        <end position="211"/>
    </location>
</feature>
<feature type="strand" evidence="8">
    <location>
        <begin position="215"/>
        <end position="224"/>
    </location>
</feature>
<feature type="helix" evidence="8">
    <location>
        <begin position="226"/>
        <end position="233"/>
    </location>
</feature>
<feature type="helix" evidence="8">
    <location>
        <begin position="247"/>
        <end position="253"/>
    </location>
</feature>
<feature type="helix" evidence="8">
    <location>
        <begin position="257"/>
        <end position="269"/>
    </location>
</feature>
<feature type="strand" evidence="8">
    <location>
        <begin position="270"/>
        <end position="277"/>
    </location>
</feature>
<feature type="helix" evidence="8">
    <location>
        <begin position="278"/>
        <end position="287"/>
    </location>
</feature>
<feature type="strand" evidence="8">
    <location>
        <begin position="293"/>
        <end position="295"/>
    </location>
</feature>
<feature type="helix" evidence="8">
    <location>
        <begin position="302"/>
        <end position="304"/>
    </location>
</feature>
<feature type="turn" evidence="8">
    <location>
        <begin position="308"/>
        <end position="310"/>
    </location>
</feature>
<feature type="helix" evidence="8">
    <location>
        <begin position="311"/>
        <end position="329"/>
    </location>
</feature>
<feature type="turn" evidence="8">
    <location>
        <begin position="330"/>
        <end position="332"/>
    </location>
</feature>
<feature type="helix" evidence="8">
    <location>
        <begin position="338"/>
        <end position="340"/>
    </location>
</feature>
<feature type="strand" evidence="8">
    <location>
        <begin position="341"/>
        <end position="350"/>
    </location>
</feature>
<feature type="turn" evidence="8">
    <location>
        <begin position="352"/>
        <end position="356"/>
    </location>
</feature>
<feature type="helix" evidence="8">
    <location>
        <begin position="357"/>
        <end position="373"/>
    </location>
</feature>
<feature type="turn" evidence="8">
    <location>
        <begin position="377"/>
        <end position="381"/>
    </location>
</feature>
<feature type="strand" evidence="8">
    <location>
        <begin position="383"/>
        <end position="389"/>
    </location>
</feature>
<feature type="strand" evidence="8">
    <location>
        <begin position="394"/>
        <end position="397"/>
    </location>
</feature>
<feature type="helix" evidence="8">
    <location>
        <begin position="399"/>
        <end position="430"/>
    </location>
</feature>
<feature type="turn" evidence="8">
    <location>
        <begin position="431"/>
        <end position="433"/>
    </location>
</feature>
<feature type="helix" evidence="8">
    <location>
        <begin position="438"/>
        <end position="440"/>
    </location>
</feature>
<feature type="helix" evidence="8">
    <location>
        <begin position="444"/>
        <end position="455"/>
    </location>
</feature>
<feature type="strand" evidence="8">
    <location>
        <begin position="465"/>
        <end position="471"/>
    </location>
</feature>
<feature type="helix" evidence="8">
    <location>
        <begin position="476"/>
        <end position="483"/>
    </location>
</feature>
<feature type="strand" evidence="8">
    <location>
        <begin position="493"/>
        <end position="498"/>
    </location>
</feature>
<feature type="helix" evidence="8">
    <location>
        <begin position="514"/>
        <end position="520"/>
    </location>
</feature>
<feature type="strand" evidence="8">
    <location>
        <begin position="522"/>
        <end position="525"/>
    </location>
</feature>
<feature type="strand" evidence="8">
    <location>
        <begin position="529"/>
        <end position="533"/>
    </location>
</feature>
<feature type="helix" evidence="8">
    <location>
        <begin position="535"/>
        <end position="542"/>
    </location>
</feature>
<feature type="strand" evidence="8">
    <location>
        <begin position="547"/>
        <end position="550"/>
    </location>
</feature>
<feature type="helix" evidence="8">
    <location>
        <begin position="554"/>
        <end position="562"/>
    </location>
</feature>
<feature type="helix" evidence="8">
    <location>
        <begin position="566"/>
        <end position="569"/>
    </location>
</feature>
<feature type="strand" evidence="8">
    <location>
        <begin position="571"/>
        <end position="574"/>
    </location>
</feature>
<feature type="strand" evidence="8">
    <location>
        <begin position="577"/>
        <end position="579"/>
    </location>
</feature>
<feature type="helix" evidence="8">
    <location>
        <begin position="581"/>
        <end position="596"/>
    </location>
</feature>
<feature type="helix" evidence="8">
    <location>
        <begin position="600"/>
        <end position="613"/>
    </location>
</feature>
<feature type="helix" evidence="8">
    <location>
        <begin position="614"/>
        <end position="617"/>
    </location>
</feature>
<feature type="helix" evidence="8">
    <location>
        <begin position="619"/>
        <end position="622"/>
    </location>
</feature>
<feature type="helix" evidence="8">
    <location>
        <begin position="624"/>
        <end position="637"/>
    </location>
</feature>
<feature type="helix" evidence="8">
    <location>
        <begin position="641"/>
        <end position="647"/>
    </location>
</feature>
<feature type="turn" evidence="8">
    <location>
        <begin position="649"/>
        <end position="651"/>
    </location>
</feature>
<accession>Q9U2D9</accession>
<comment type="function">
    <text evidence="3">Transfers the glycosyl residue from UDP-Glc to the non-reducing end of alpha-1,4-glucan.</text>
</comment>
<comment type="catalytic activity">
    <reaction evidence="3">
        <text>[(1-&gt;4)-alpha-D-glucosyl](n) + UDP-alpha-D-glucose = [(1-&gt;4)-alpha-D-glucosyl](n+1) + UDP + H(+)</text>
        <dbReference type="Rhea" id="RHEA:18549"/>
        <dbReference type="Rhea" id="RHEA-COMP:9584"/>
        <dbReference type="Rhea" id="RHEA-COMP:9587"/>
        <dbReference type="ChEBI" id="CHEBI:15378"/>
        <dbReference type="ChEBI" id="CHEBI:15444"/>
        <dbReference type="ChEBI" id="CHEBI:58223"/>
        <dbReference type="ChEBI" id="CHEBI:58885"/>
        <dbReference type="EC" id="2.4.1.11"/>
    </reaction>
    <physiologicalReaction direction="left-to-right" evidence="3">
        <dbReference type="Rhea" id="RHEA:18550"/>
    </physiologicalReaction>
</comment>
<comment type="biophysicochemical properties">
    <kinetics>
        <KM evidence="3">3.9 mM for UDP-glucose (at 30 degrees Celsius)</KM>
        <Vmax evidence="3">126.0 pmol/min/ug enzyme</Vmax>
    </kinetics>
</comment>
<comment type="pathway">
    <text evidence="3">Glycan biosynthesis; glycogen biosynthesis.</text>
</comment>
<comment type="subunit">
    <text evidence="3">Forms a hetero-octamer with each protomer of the gsy-1 homotetramer bound to one molecule of gyg-1. The N-terminus is involved in interprotomer contacts with gyg-1. The interaction with gyg-1 is required for glycogen production but is not required for gsy-1 intrinsic activity.</text>
</comment>
<comment type="disruption phenotype">
    <text evidence="4">RNAi-mediated knockdown results in reduced survival.</text>
</comment>
<comment type="similarity">
    <text evidence="6">Belongs to the glycosyltransferase 3 family.</text>
</comment>